<sequence>MLDIQQIKEIIPHRYPFLLVDKVLEVEEGKRAIGIKNVTANEEFFNGHFPDYPVMPGVLIVEALAQVGAVAMLKKEENRGRLAFFAGIDNCRFKRQVRPGDQLRLEVEMTRVRGAIGKGKAIATVDGEIACETEITFALGDKKE</sequence>
<name>FABZ_BACAC</name>
<gene>
    <name evidence="1" type="primary">fabZ</name>
    <name type="ordered locus">BAMEG_5553</name>
</gene>
<reference key="1">
    <citation type="submission" date="2008-10" db="EMBL/GenBank/DDBJ databases">
        <title>Genome sequence of Bacillus anthracis str. CDC 684.</title>
        <authorList>
            <person name="Dodson R.J."/>
            <person name="Munk A.C."/>
            <person name="Brettin T."/>
            <person name="Bruce D."/>
            <person name="Detter C."/>
            <person name="Tapia R."/>
            <person name="Han C."/>
            <person name="Sutton G."/>
            <person name="Sims D."/>
        </authorList>
    </citation>
    <scope>NUCLEOTIDE SEQUENCE [LARGE SCALE GENOMIC DNA]</scope>
    <source>
        <strain>CDC 684 / NRRL 3495</strain>
    </source>
</reference>
<feature type="chain" id="PRO_1000134686" description="3-hydroxyacyl-[acyl-carrier-protein] dehydratase FabZ">
    <location>
        <begin position="1"/>
        <end position="144"/>
    </location>
</feature>
<feature type="active site" evidence="1">
    <location>
        <position position="48"/>
    </location>
</feature>
<protein>
    <recommendedName>
        <fullName evidence="1">3-hydroxyacyl-[acyl-carrier-protein] dehydratase FabZ</fullName>
        <ecNumber evidence="1">4.2.1.59</ecNumber>
    </recommendedName>
    <alternativeName>
        <fullName evidence="1">(3R)-hydroxymyristoyl-[acyl-carrier-protein] dehydratase</fullName>
        <shortName evidence="1">(3R)-hydroxymyristoyl-ACP dehydrase</shortName>
    </alternativeName>
    <alternativeName>
        <fullName evidence="1">Beta-hydroxyacyl-ACP dehydratase</fullName>
    </alternativeName>
</protein>
<keyword id="KW-0963">Cytoplasm</keyword>
<keyword id="KW-0441">Lipid A biosynthesis</keyword>
<keyword id="KW-0444">Lipid biosynthesis</keyword>
<keyword id="KW-0443">Lipid metabolism</keyword>
<keyword id="KW-0456">Lyase</keyword>
<proteinExistence type="inferred from homology"/>
<accession>C3LEN8</accession>
<organism>
    <name type="scientific">Bacillus anthracis (strain CDC 684 / NRRL 3495)</name>
    <dbReference type="NCBI Taxonomy" id="568206"/>
    <lineage>
        <taxon>Bacteria</taxon>
        <taxon>Bacillati</taxon>
        <taxon>Bacillota</taxon>
        <taxon>Bacilli</taxon>
        <taxon>Bacillales</taxon>
        <taxon>Bacillaceae</taxon>
        <taxon>Bacillus</taxon>
        <taxon>Bacillus cereus group</taxon>
    </lineage>
</organism>
<comment type="function">
    <text evidence="1">Involved in unsaturated fatty acids biosynthesis. Catalyzes the dehydration of short chain beta-hydroxyacyl-ACPs and long chain saturated and unsaturated beta-hydroxyacyl-ACPs.</text>
</comment>
<comment type="catalytic activity">
    <reaction evidence="1">
        <text>a (3R)-hydroxyacyl-[ACP] = a (2E)-enoyl-[ACP] + H2O</text>
        <dbReference type="Rhea" id="RHEA:13097"/>
        <dbReference type="Rhea" id="RHEA-COMP:9925"/>
        <dbReference type="Rhea" id="RHEA-COMP:9945"/>
        <dbReference type="ChEBI" id="CHEBI:15377"/>
        <dbReference type="ChEBI" id="CHEBI:78784"/>
        <dbReference type="ChEBI" id="CHEBI:78827"/>
        <dbReference type="EC" id="4.2.1.59"/>
    </reaction>
</comment>
<comment type="subcellular location">
    <subcellularLocation>
        <location evidence="1">Cytoplasm</location>
    </subcellularLocation>
</comment>
<comment type="similarity">
    <text evidence="1">Belongs to the thioester dehydratase family. FabZ subfamily.</text>
</comment>
<dbReference type="EC" id="4.2.1.59" evidence="1"/>
<dbReference type="EMBL" id="CP001215">
    <property type="protein sequence ID" value="ACP14249.1"/>
    <property type="molecule type" value="Genomic_DNA"/>
</dbReference>
<dbReference type="RefSeq" id="WP_000884318.1">
    <property type="nucleotide sequence ID" value="NC_012581.1"/>
</dbReference>
<dbReference type="SMR" id="C3LEN8"/>
<dbReference type="GeneID" id="93005856"/>
<dbReference type="KEGG" id="bah:BAMEG_5553"/>
<dbReference type="HOGENOM" id="CLU_078912_3_0_9"/>
<dbReference type="GO" id="GO:0005737">
    <property type="term" value="C:cytoplasm"/>
    <property type="evidence" value="ECO:0007669"/>
    <property type="project" value="UniProtKB-SubCell"/>
</dbReference>
<dbReference type="GO" id="GO:0016020">
    <property type="term" value="C:membrane"/>
    <property type="evidence" value="ECO:0007669"/>
    <property type="project" value="GOC"/>
</dbReference>
<dbReference type="GO" id="GO:0019171">
    <property type="term" value="F:(3R)-hydroxyacyl-[acyl-carrier-protein] dehydratase activity"/>
    <property type="evidence" value="ECO:0007669"/>
    <property type="project" value="UniProtKB-EC"/>
</dbReference>
<dbReference type="GO" id="GO:0006633">
    <property type="term" value="P:fatty acid biosynthetic process"/>
    <property type="evidence" value="ECO:0007669"/>
    <property type="project" value="UniProtKB-UniRule"/>
</dbReference>
<dbReference type="GO" id="GO:0009245">
    <property type="term" value="P:lipid A biosynthetic process"/>
    <property type="evidence" value="ECO:0007669"/>
    <property type="project" value="UniProtKB-UniRule"/>
</dbReference>
<dbReference type="CDD" id="cd01288">
    <property type="entry name" value="FabZ"/>
    <property type="match status" value="1"/>
</dbReference>
<dbReference type="FunFam" id="3.10.129.10:FF:000001">
    <property type="entry name" value="3-hydroxyacyl-[acyl-carrier-protein] dehydratase FabZ"/>
    <property type="match status" value="1"/>
</dbReference>
<dbReference type="Gene3D" id="3.10.129.10">
    <property type="entry name" value="Hotdog Thioesterase"/>
    <property type="match status" value="1"/>
</dbReference>
<dbReference type="HAMAP" id="MF_00406">
    <property type="entry name" value="FabZ"/>
    <property type="match status" value="1"/>
</dbReference>
<dbReference type="InterPro" id="IPR013114">
    <property type="entry name" value="FabA_FabZ"/>
</dbReference>
<dbReference type="InterPro" id="IPR010084">
    <property type="entry name" value="FabZ"/>
</dbReference>
<dbReference type="InterPro" id="IPR029069">
    <property type="entry name" value="HotDog_dom_sf"/>
</dbReference>
<dbReference type="NCBIfam" id="TIGR01750">
    <property type="entry name" value="fabZ"/>
    <property type="match status" value="1"/>
</dbReference>
<dbReference type="NCBIfam" id="NF000582">
    <property type="entry name" value="PRK00006.1"/>
    <property type="match status" value="1"/>
</dbReference>
<dbReference type="PANTHER" id="PTHR30272">
    <property type="entry name" value="3-HYDROXYACYL-[ACYL-CARRIER-PROTEIN] DEHYDRATASE"/>
    <property type="match status" value="1"/>
</dbReference>
<dbReference type="PANTHER" id="PTHR30272:SF1">
    <property type="entry name" value="3-HYDROXYACYL-[ACYL-CARRIER-PROTEIN] DEHYDRATASE"/>
    <property type="match status" value="1"/>
</dbReference>
<dbReference type="Pfam" id="PF07977">
    <property type="entry name" value="FabA"/>
    <property type="match status" value="1"/>
</dbReference>
<dbReference type="SUPFAM" id="SSF54637">
    <property type="entry name" value="Thioesterase/thiol ester dehydrase-isomerase"/>
    <property type="match status" value="1"/>
</dbReference>
<evidence type="ECO:0000255" key="1">
    <source>
        <dbReference type="HAMAP-Rule" id="MF_00406"/>
    </source>
</evidence>